<keyword id="KW-1185">Reference proteome</keyword>
<sequence length="232" mass="26858">MESNKMKSITKMTVNTLQMDSCKAAAKRFKNATWELISNDFNLDIMNMFCILYYACTSHELKLDELVFQTAHKVIMNEVSVSIGESRMFIRIYVSFHMLMGDLNELLHHGISKFEGSPIKDMTSYLIYGEEYVRNLFQSINSTRATPVYQLFITKVPRQFPAITHGDSEYTYMLMVHNYLSTQSIAGVSHTPSNSDNYVIRTAEEYVHHHYAQLDRQASDNKMRPESSDQME</sequence>
<organismHost>
    <name type="scientific">Eriophyes pyri</name>
    <name type="common">pearleaf blister mite</name>
    <dbReference type="NCBI Taxonomy" id="483436"/>
</organismHost>
<organismHost>
    <name type="scientific">Sorbus aucuparia</name>
    <name type="common">European mountain ash</name>
    <name type="synonym">Rowan</name>
    <dbReference type="NCBI Taxonomy" id="36599"/>
</organismHost>
<proteinExistence type="evidence at transcript level"/>
<name>VG27_EMARV</name>
<feature type="chain" id="PRO_0000395606" description="Uncharacterized 27 kDa protein">
    <location>
        <begin position="1"/>
        <end position="232"/>
    </location>
</feature>
<dbReference type="EMBL" id="DQ831828">
    <property type="protein sequence ID" value="ABH05069.1"/>
    <property type="molecule type" value="mRNA"/>
</dbReference>
<dbReference type="RefSeq" id="YP_003104766.1">
    <property type="nucleotide sequence ID" value="NC_013107.1"/>
</dbReference>
<dbReference type="GeneID" id="8355990"/>
<dbReference type="KEGG" id="vg:8355990"/>
<dbReference type="Proteomes" id="UP000006676">
    <property type="component" value="Genome"/>
</dbReference>
<dbReference type="InterPro" id="IPR049107">
    <property type="entry name" value="ABC_AB"/>
</dbReference>
<dbReference type="Pfam" id="PF21707">
    <property type="entry name" value="ABC_AB"/>
    <property type="match status" value="1"/>
</dbReference>
<reference key="1">
    <citation type="journal article" date="2007" name="J. Gen. Virol.">
        <title>A novel, multipartite, negative-strand RNA virus is associated with the ringspot disease of European mountain ash (Sorbus aucuparia L.).</title>
        <authorList>
            <person name="Mielke N."/>
            <person name="Muehlbach H.P."/>
        </authorList>
    </citation>
    <scope>NUCLEOTIDE SEQUENCE [GENOMIC RNA]</scope>
</reference>
<accession>Q0PI71</accession>
<organism>
    <name type="scientific">European mountain ash ringspot-associated virus (isolate Sorbus aucuparia)</name>
    <name type="common">EMARAV</name>
    <dbReference type="NCBI Taxonomy" id="1980426"/>
    <lineage>
        <taxon>Viruses</taxon>
        <taxon>Riboviria</taxon>
        <taxon>Orthornavirae</taxon>
        <taxon>Negarnaviricota</taxon>
        <taxon>Polyploviricotina</taxon>
        <taxon>Ellioviricetes</taxon>
        <taxon>Bunyavirales</taxon>
        <taxon>Fimoviridae</taxon>
        <taxon>Emaravirus</taxon>
    </lineage>
</organism>
<protein>
    <recommendedName>
        <fullName>Uncharacterized 27 kDa protein</fullName>
    </recommendedName>
</protein>